<reference key="1">
    <citation type="journal article" date="2005" name="Nature">
        <title>The genome of the social amoeba Dictyostelium discoideum.</title>
        <authorList>
            <person name="Eichinger L."/>
            <person name="Pachebat J.A."/>
            <person name="Gloeckner G."/>
            <person name="Rajandream M.A."/>
            <person name="Sucgang R."/>
            <person name="Berriman M."/>
            <person name="Song J."/>
            <person name="Olsen R."/>
            <person name="Szafranski K."/>
            <person name="Xu Q."/>
            <person name="Tunggal B."/>
            <person name="Kummerfeld S."/>
            <person name="Madera M."/>
            <person name="Konfortov B.A."/>
            <person name="Rivero F."/>
            <person name="Bankier A.T."/>
            <person name="Lehmann R."/>
            <person name="Hamlin N."/>
            <person name="Davies R."/>
            <person name="Gaudet P."/>
            <person name="Fey P."/>
            <person name="Pilcher K."/>
            <person name="Chen G."/>
            <person name="Saunders D."/>
            <person name="Sodergren E.J."/>
            <person name="Davis P."/>
            <person name="Kerhornou A."/>
            <person name="Nie X."/>
            <person name="Hall N."/>
            <person name="Anjard C."/>
            <person name="Hemphill L."/>
            <person name="Bason N."/>
            <person name="Farbrother P."/>
            <person name="Desany B."/>
            <person name="Just E."/>
            <person name="Morio T."/>
            <person name="Rost R."/>
            <person name="Churcher C.M."/>
            <person name="Cooper J."/>
            <person name="Haydock S."/>
            <person name="van Driessche N."/>
            <person name="Cronin A."/>
            <person name="Goodhead I."/>
            <person name="Muzny D.M."/>
            <person name="Mourier T."/>
            <person name="Pain A."/>
            <person name="Lu M."/>
            <person name="Harper D."/>
            <person name="Lindsay R."/>
            <person name="Hauser H."/>
            <person name="James K.D."/>
            <person name="Quiles M."/>
            <person name="Madan Babu M."/>
            <person name="Saito T."/>
            <person name="Buchrieser C."/>
            <person name="Wardroper A."/>
            <person name="Felder M."/>
            <person name="Thangavelu M."/>
            <person name="Johnson D."/>
            <person name="Knights A."/>
            <person name="Loulseged H."/>
            <person name="Mungall K.L."/>
            <person name="Oliver K."/>
            <person name="Price C."/>
            <person name="Quail M.A."/>
            <person name="Urushihara H."/>
            <person name="Hernandez J."/>
            <person name="Rabbinowitsch E."/>
            <person name="Steffen D."/>
            <person name="Sanders M."/>
            <person name="Ma J."/>
            <person name="Kohara Y."/>
            <person name="Sharp S."/>
            <person name="Simmonds M.N."/>
            <person name="Spiegler S."/>
            <person name="Tivey A."/>
            <person name="Sugano S."/>
            <person name="White B."/>
            <person name="Walker D."/>
            <person name="Woodward J.R."/>
            <person name="Winckler T."/>
            <person name="Tanaka Y."/>
            <person name="Shaulsky G."/>
            <person name="Schleicher M."/>
            <person name="Weinstock G.M."/>
            <person name="Rosenthal A."/>
            <person name="Cox E.C."/>
            <person name="Chisholm R.L."/>
            <person name="Gibbs R.A."/>
            <person name="Loomis W.F."/>
            <person name="Platzer M."/>
            <person name="Kay R.R."/>
            <person name="Williams J.G."/>
            <person name="Dear P.H."/>
            <person name="Noegel A.A."/>
            <person name="Barrell B.G."/>
            <person name="Kuspa A."/>
        </authorList>
    </citation>
    <scope>NUCLEOTIDE SEQUENCE [LARGE SCALE GENOMIC DNA]</scope>
    <source>
        <strain>AX4</strain>
    </source>
</reference>
<keyword id="KW-0175">Coiled coil</keyword>
<keyword id="KW-1185">Reference proteome</keyword>
<keyword id="KW-0677">Repeat</keyword>
<feature type="chain" id="PRO_0000363979" description="FNIP repeat-containing protein DDB_G0290639">
    <location>
        <begin position="1"/>
        <end position="616"/>
    </location>
</feature>
<feature type="repeat" description="FNIP 1">
    <location>
        <begin position="337"/>
        <end position="379"/>
    </location>
</feature>
<feature type="repeat" description="FNIP 2">
    <location>
        <begin position="380"/>
        <end position="421"/>
    </location>
</feature>
<feature type="repeat" description="FNIP 3">
    <location>
        <begin position="423"/>
        <end position="464"/>
    </location>
</feature>
<feature type="repeat" description="FNIP 4">
    <location>
        <begin position="466"/>
        <end position="508"/>
    </location>
</feature>
<feature type="repeat" description="FNIP 5">
    <location>
        <begin position="509"/>
        <end position="550"/>
    </location>
</feature>
<feature type="repeat" description="FNIP 6">
    <location>
        <begin position="552"/>
        <end position="593"/>
    </location>
</feature>
<feature type="region of interest" description="Disordered" evidence="2">
    <location>
        <begin position="241"/>
        <end position="270"/>
    </location>
</feature>
<feature type="coiled-coil region" evidence="1">
    <location>
        <begin position="239"/>
        <end position="274"/>
    </location>
</feature>
<feature type="compositionally biased region" description="Low complexity" evidence="2">
    <location>
        <begin position="241"/>
        <end position="269"/>
    </location>
</feature>
<name>Y0639_DICDI</name>
<sequence>MIENKIEQNCALHTNKNLEFLCLDCKLIPCCTLCISRGGEHHRHGIDSLESIQTSSILSMMNSFKDVYPKVIERIENDQQILKDSDEIFNEIQSQYNKNKITLNQEFKKIHNILSILELDIERQLTTDFEINTLINTTITSSINNDIDNYNKNKNNNSITDILNISIKNIQQYNDDDYYKIDSNSIELIKQYQQSLLLLNNNNNIDNLNKLKEYNNQTIKFDNQIINDIRSNLKLIYSFENNNNNNNNNNNNNNNNNNNNNNNNNNNNNKKTEKLNIEIDENNFKFIKKQNKKYYIYSENNEFPKNEERIAFGEGCGSLLKVNWNKNLKNVMLLDGFEESLEPGILPDGIVHLEIFDIKTELAVGSIPSTVTSLTFNDGFNQSIEVGIIPSSVIYLDLHDIKQPLKIGSIPQSVQDLKLCNGFSQPLEPGIITNKIKTLSIHEIKTQLQIGSIPNSVTHMVFYDGFNQLLSAGIIPEGVSWLFFFNIKIPLVVGSIPQSIYYLVFSDGFNQTISPGIITNGVEILCLRDIKQPLEVNSIPKSVTNLLIDSGFQQPLTPGIIPNSIKELALGNIKTQLVEGSIPKKIQKIILDKNFNQSLEICDLDKSVEIRTNYLK</sequence>
<evidence type="ECO:0000255" key="1"/>
<evidence type="ECO:0000256" key="2">
    <source>
        <dbReference type="SAM" id="MobiDB-lite"/>
    </source>
</evidence>
<protein>
    <recommendedName>
        <fullName>FNIP repeat-containing protein DDB_G0290639</fullName>
    </recommendedName>
</protein>
<accession>Q54FS1</accession>
<dbReference type="EMBL" id="AAFI02000164">
    <property type="protein sequence ID" value="EAL62180.1"/>
    <property type="molecule type" value="Genomic_DNA"/>
</dbReference>
<dbReference type="RefSeq" id="XP_635696.1">
    <property type="nucleotide sequence ID" value="XM_630604.1"/>
</dbReference>
<dbReference type="SMR" id="Q54FS1"/>
<dbReference type="FunCoup" id="Q54FS1">
    <property type="interactions" value="4"/>
</dbReference>
<dbReference type="PaxDb" id="44689-DDB0266502"/>
<dbReference type="EnsemblProtists" id="EAL62180">
    <property type="protein sequence ID" value="EAL62180"/>
    <property type="gene ID" value="DDB_G0290639"/>
</dbReference>
<dbReference type="GeneID" id="8627767"/>
<dbReference type="KEGG" id="ddi:DDB_G0290639"/>
<dbReference type="dictyBase" id="DDB_G0290639"/>
<dbReference type="VEuPathDB" id="AmoebaDB:DDB_G0290639"/>
<dbReference type="HOGENOM" id="CLU_018467_1_0_1"/>
<dbReference type="InParanoid" id="Q54FS1"/>
<dbReference type="OMA" id="HIDTVED"/>
<dbReference type="PhylomeDB" id="Q54FS1"/>
<dbReference type="PRO" id="PR:Q54FS1"/>
<dbReference type="Proteomes" id="UP000002195">
    <property type="component" value="Chromosome 5"/>
</dbReference>
<dbReference type="CDD" id="cd19756">
    <property type="entry name" value="Bbox2"/>
    <property type="match status" value="1"/>
</dbReference>
<dbReference type="InterPro" id="IPR008615">
    <property type="entry name" value="FNIP"/>
</dbReference>
<dbReference type="InterPro" id="IPR052697">
    <property type="entry name" value="FNIP_repeat"/>
</dbReference>
<dbReference type="PANTHER" id="PTHR32031:SF47">
    <property type="entry name" value="B BOX-TYPE DOMAIN-CONTAINING PROTEIN-RELATED"/>
    <property type="match status" value="1"/>
</dbReference>
<dbReference type="PANTHER" id="PTHR32031">
    <property type="entry name" value="FNIP REPEAT-CONTAINING PROTEIN-RELATED-RELATED"/>
    <property type="match status" value="1"/>
</dbReference>
<dbReference type="Pfam" id="PF05725">
    <property type="entry name" value="FNIP"/>
    <property type="match status" value="5"/>
</dbReference>
<dbReference type="SUPFAM" id="SSF57845">
    <property type="entry name" value="B-box zinc-binding domain"/>
    <property type="match status" value="1"/>
</dbReference>
<proteinExistence type="predicted"/>
<organism>
    <name type="scientific">Dictyostelium discoideum</name>
    <name type="common">Social amoeba</name>
    <dbReference type="NCBI Taxonomy" id="44689"/>
    <lineage>
        <taxon>Eukaryota</taxon>
        <taxon>Amoebozoa</taxon>
        <taxon>Evosea</taxon>
        <taxon>Eumycetozoa</taxon>
        <taxon>Dictyostelia</taxon>
        <taxon>Dictyosteliales</taxon>
        <taxon>Dictyosteliaceae</taxon>
        <taxon>Dictyostelium</taxon>
    </lineage>
</organism>
<gene>
    <name type="ORF">DDB_G0290639</name>
</gene>